<name>HIS8_BIFLO</name>
<gene>
    <name evidence="1" type="primary">hisC</name>
    <name type="ordered locus">BL1296</name>
</gene>
<accession>Q8G4S8</accession>
<proteinExistence type="inferred from homology"/>
<reference key="1">
    <citation type="journal article" date="2002" name="Proc. Natl. Acad. Sci. U.S.A.">
        <title>The genome sequence of Bifidobacterium longum reflects its adaptation to the human gastrointestinal tract.</title>
        <authorList>
            <person name="Schell M.A."/>
            <person name="Karmirantzou M."/>
            <person name="Snel B."/>
            <person name="Vilanova D."/>
            <person name="Berger B."/>
            <person name="Pessi G."/>
            <person name="Zwahlen M.-C."/>
            <person name="Desiere F."/>
            <person name="Bork P."/>
            <person name="Delley M."/>
            <person name="Pridmore R.D."/>
            <person name="Arigoni F."/>
        </authorList>
    </citation>
    <scope>NUCLEOTIDE SEQUENCE [LARGE SCALE GENOMIC DNA]</scope>
    <source>
        <strain>NCC 2705</strain>
    </source>
</reference>
<sequence length="386" mass="42535">MSSIPANLPLRNDLIGEEPYGAPQLDVPVCLNVNENPYAPDPAVCDTIAKRVREIAPTLNRYPDREHIELRQAFSDYLARESGTRLDVDELWGANGSNEIMLQLFQAFGGPGRTALGADPTYSMYPEYARDTFTGWKLAHRNADFTLNVDKVLEAIAEVKPSMVLLTSPNNPTGTPLPMEDIERILAACETAEVVGAGEGVHPILVIDEAYVEFRKPGTPSAVSLIKDHPNLAVSRTMSKAFAFAGARVGYLAASKGIIDCVRIVRMPYHLSAVTQAAALAAFEHADEQLSRVEHLRETREATAAWLKEQTYKDQPLEVAESGSNFLLFGGHFDKREAIFDELLKRGVLIRVVGPDGWLRVCMGTDEEMETFRNALVEVLRIVEAA</sequence>
<comment type="catalytic activity">
    <reaction evidence="1">
        <text>L-histidinol phosphate + 2-oxoglutarate = 3-(imidazol-4-yl)-2-oxopropyl phosphate + L-glutamate</text>
        <dbReference type="Rhea" id="RHEA:23744"/>
        <dbReference type="ChEBI" id="CHEBI:16810"/>
        <dbReference type="ChEBI" id="CHEBI:29985"/>
        <dbReference type="ChEBI" id="CHEBI:57766"/>
        <dbReference type="ChEBI" id="CHEBI:57980"/>
        <dbReference type="EC" id="2.6.1.9"/>
    </reaction>
</comment>
<comment type="cofactor">
    <cofactor evidence="1">
        <name>pyridoxal 5'-phosphate</name>
        <dbReference type="ChEBI" id="CHEBI:597326"/>
    </cofactor>
</comment>
<comment type="pathway">
    <text evidence="1">Amino-acid biosynthesis; L-histidine biosynthesis; L-histidine from 5-phospho-alpha-D-ribose 1-diphosphate: step 7/9.</text>
</comment>
<comment type="subunit">
    <text evidence="1">Homodimer.</text>
</comment>
<comment type="similarity">
    <text evidence="1">Belongs to the class-II pyridoxal-phosphate-dependent aminotransferase family. Histidinol-phosphate aminotransferase subfamily.</text>
</comment>
<dbReference type="EC" id="2.6.1.9" evidence="1"/>
<dbReference type="EMBL" id="AE014295">
    <property type="protein sequence ID" value="AAN25097.1"/>
    <property type="molecule type" value="Genomic_DNA"/>
</dbReference>
<dbReference type="RefSeq" id="NP_696461.1">
    <property type="nucleotide sequence ID" value="NC_004307.2"/>
</dbReference>
<dbReference type="RefSeq" id="WP_011067977.1">
    <property type="nucleotide sequence ID" value="NC_004307.2"/>
</dbReference>
<dbReference type="SMR" id="Q8G4S8"/>
<dbReference type="STRING" id="206672.BL1296"/>
<dbReference type="EnsemblBacteria" id="AAN25097">
    <property type="protein sequence ID" value="AAN25097"/>
    <property type="gene ID" value="BL1296"/>
</dbReference>
<dbReference type="KEGG" id="blo:BL1296"/>
<dbReference type="PATRIC" id="fig|206672.9.peg.145"/>
<dbReference type="HOGENOM" id="CLU_017584_3_1_11"/>
<dbReference type="OrthoDB" id="9809616at2"/>
<dbReference type="PhylomeDB" id="Q8G4S8"/>
<dbReference type="UniPathway" id="UPA00031">
    <property type="reaction ID" value="UER00012"/>
</dbReference>
<dbReference type="Proteomes" id="UP000000439">
    <property type="component" value="Chromosome"/>
</dbReference>
<dbReference type="GO" id="GO:0004400">
    <property type="term" value="F:histidinol-phosphate transaminase activity"/>
    <property type="evidence" value="ECO:0007669"/>
    <property type="project" value="UniProtKB-UniRule"/>
</dbReference>
<dbReference type="GO" id="GO:0030170">
    <property type="term" value="F:pyridoxal phosphate binding"/>
    <property type="evidence" value="ECO:0007669"/>
    <property type="project" value="InterPro"/>
</dbReference>
<dbReference type="GO" id="GO:0000105">
    <property type="term" value="P:L-histidine biosynthetic process"/>
    <property type="evidence" value="ECO:0007669"/>
    <property type="project" value="UniProtKB-UniRule"/>
</dbReference>
<dbReference type="CDD" id="cd00609">
    <property type="entry name" value="AAT_like"/>
    <property type="match status" value="1"/>
</dbReference>
<dbReference type="Gene3D" id="3.90.1150.10">
    <property type="entry name" value="Aspartate Aminotransferase, domain 1"/>
    <property type="match status" value="1"/>
</dbReference>
<dbReference type="Gene3D" id="3.40.640.10">
    <property type="entry name" value="Type I PLP-dependent aspartate aminotransferase-like (Major domain)"/>
    <property type="match status" value="1"/>
</dbReference>
<dbReference type="HAMAP" id="MF_01023">
    <property type="entry name" value="HisC_aminotrans_2"/>
    <property type="match status" value="1"/>
</dbReference>
<dbReference type="InterPro" id="IPR001917">
    <property type="entry name" value="Aminotrans_II_pyridoxalP_BS"/>
</dbReference>
<dbReference type="InterPro" id="IPR004839">
    <property type="entry name" value="Aminotransferase_I/II_large"/>
</dbReference>
<dbReference type="InterPro" id="IPR005861">
    <property type="entry name" value="HisP_aminotrans"/>
</dbReference>
<dbReference type="InterPro" id="IPR015424">
    <property type="entry name" value="PyrdxlP-dep_Trfase"/>
</dbReference>
<dbReference type="InterPro" id="IPR015421">
    <property type="entry name" value="PyrdxlP-dep_Trfase_major"/>
</dbReference>
<dbReference type="InterPro" id="IPR015422">
    <property type="entry name" value="PyrdxlP-dep_Trfase_small"/>
</dbReference>
<dbReference type="NCBIfam" id="NF002877">
    <property type="entry name" value="PRK03317.1"/>
    <property type="match status" value="1"/>
</dbReference>
<dbReference type="PANTHER" id="PTHR42885:SF2">
    <property type="entry name" value="HISTIDINOL-PHOSPHATE AMINOTRANSFERASE"/>
    <property type="match status" value="1"/>
</dbReference>
<dbReference type="PANTHER" id="PTHR42885">
    <property type="entry name" value="HISTIDINOL-PHOSPHATE AMINOTRANSFERASE-RELATED"/>
    <property type="match status" value="1"/>
</dbReference>
<dbReference type="Pfam" id="PF00155">
    <property type="entry name" value="Aminotran_1_2"/>
    <property type="match status" value="1"/>
</dbReference>
<dbReference type="SUPFAM" id="SSF53383">
    <property type="entry name" value="PLP-dependent transferases"/>
    <property type="match status" value="1"/>
</dbReference>
<dbReference type="PROSITE" id="PS00599">
    <property type="entry name" value="AA_TRANSFER_CLASS_2"/>
    <property type="match status" value="1"/>
</dbReference>
<evidence type="ECO:0000255" key="1">
    <source>
        <dbReference type="HAMAP-Rule" id="MF_01023"/>
    </source>
</evidence>
<organism>
    <name type="scientific">Bifidobacterium longum (strain NCC 2705)</name>
    <dbReference type="NCBI Taxonomy" id="206672"/>
    <lineage>
        <taxon>Bacteria</taxon>
        <taxon>Bacillati</taxon>
        <taxon>Actinomycetota</taxon>
        <taxon>Actinomycetes</taxon>
        <taxon>Bifidobacteriales</taxon>
        <taxon>Bifidobacteriaceae</taxon>
        <taxon>Bifidobacterium</taxon>
    </lineage>
</organism>
<protein>
    <recommendedName>
        <fullName evidence="1">Histidinol-phosphate aminotransferase</fullName>
        <ecNumber evidence="1">2.6.1.9</ecNumber>
    </recommendedName>
    <alternativeName>
        <fullName evidence="1">Imidazole acetol-phosphate transaminase</fullName>
    </alternativeName>
</protein>
<keyword id="KW-0028">Amino-acid biosynthesis</keyword>
<keyword id="KW-0032">Aminotransferase</keyword>
<keyword id="KW-0368">Histidine biosynthesis</keyword>
<keyword id="KW-0663">Pyridoxal phosphate</keyword>
<keyword id="KW-1185">Reference proteome</keyword>
<keyword id="KW-0808">Transferase</keyword>
<feature type="chain" id="PRO_0000153316" description="Histidinol-phosphate aminotransferase">
    <location>
        <begin position="1"/>
        <end position="386"/>
    </location>
</feature>
<feature type="modified residue" description="N6-(pyridoxal phosphate)lysine" evidence="1">
    <location>
        <position position="240"/>
    </location>
</feature>